<protein>
    <recommendedName>
        <fullName>Probable cytochrome c oxidase subunit 1</fullName>
        <ecNumber>7.1.1.9</ecNumber>
    </recommendedName>
    <alternativeName>
        <fullName>Cytochrome aa3 subunit 1</fullName>
    </alternativeName>
    <alternativeName>
        <fullName>Cytochrome c oxidase polypeptide I</fullName>
    </alternativeName>
</protein>
<proteinExistence type="inferred from homology"/>
<keyword id="KW-1003">Cell membrane</keyword>
<keyword id="KW-0186">Copper</keyword>
<keyword id="KW-0249">Electron transport</keyword>
<keyword id="KW-0349">Heme</keyword>
<keyword id="KW-0408">Iron</keyword>
<keyword id="KW-0472">Membrane</keyword>
<keyword id="KW-0479">Metal-binding</keyword>
<keyword id="KW-0679">Respiratory chain</keyword>
<keyword id="KW-1278">Translocase</keyword>
<keyword id="KW-0812">Transmembrane</keyword>
<keyword id="KW-1133">Transmembrane helix</keyword>
<keyword id="KW-0813">Transport</keyword>
<accession>Q4ULU5</accession>
<sequence>MDITTTEIYHDDHHTPHGWKRWLFSTNHKDIGIMYIIFAVFAGIVGGLFSLLFRLELAMPGGTFLNHDFQLYNVLITAHAVIMVFFMIMPALFGGFGNYFVPLLIGAPDMAFPRLNNISFWLLVTAFILLMGSAFVDGGPGTGWTLYPPLSNLSGHPGAAVDMAIFSLHLTGLSSILGSINLIVTIFNMRAPGMGLFKMPLFVWSILVTAFLIILAMPVLGGAITMLLTDRNFGTNFFKPDGGGDPVLFQHLFWFFGHPEVYIVILPGFGIVSQVISTFSRKPIFGYQGMVGAMVIIGFVGFIVWAHHMFTVGLSYNALIYFTAGTMIIAVPTGIKIFSWIATMWGGSITFPTPMLFSIGFIILFTIGGVTGIILSNSALDRVLHDTYYVVAHFHYTMSLGALFTAFAGFYYWFGKISGKQYPEILGKIHFWITFIGVNLTFFPQHFLGLAGMPRRIPDYPEAFAGWNMVSSIGAGISMAAALYFVFIVFYTLKYGKDCPNNPWGDGADTLEWTLTSPPPFHTFETPPHIEG</sequence>
<organism>
    <name type="scientific">Rickettsia felis (strain ATCC VR-1525 / URRWXCal2)</name>
    <name type="common">Rickettsia azadi</name>
    <dbReference type="NCBI Taxonomy" id="315456"/>
    <lineage>
        <taxon>Bacteria</taxon>
        <taxon>Pseudomonadati</taxon>
        <taxon>Pseudomonadota</taxon>
        <taxon>Alphaproteobacteria</taxon>
        <taxon>Rickettsiales</taxon>
        <taxon>Rickettsiaceae</taxon>
        <taxon>Rickettsieae</taxon>
        <taxon>Rickettsia</taxon>
        <taxon>spotted fever group</taxon>
    </lineage>
</organism>
<evidence type="ECO:0000250" key="1"/>
<evidence type="ECO:0000255" key="2"/>
<evidence type="ECO:0000305" key="3"/>
<feature type="chain" id="PRO_0000280885" description="Probable cytochrome c oxidase subunit 1">
    <location>
        <begin position="1"/>
        <end position="532"/>
    </location>
</feature>
<feature type="transmembrane region" description="Helical" evidence="2">
    <location>
        <begin position="33"/>
        <end position="53"/>
    </location>
</feature>
<feature type="transmembrane region" description="Helical" evidence="2">
    <location>
        <begin position="74"/>
        <end position="94"/>
    </location>
</feature>
<feature type="transmembrane region" description="Helical" evidence="2">
    <location>
        <begin position="95"/>
        <end position="115"/>
    </location>
</feature>
<feature type="transmembrane region" description="Helical" evidence="2">
    <location>
        <begin position="118"/>
        <end position="138"/>
    </location>
</feature>
<feature type="transmembrane region" description="Helical" evidence="2">
    <location>
        <begin position="163"/>
        <end position="183"/>
    </location>
</feature>
<feature type="transmembrane region" description="Helical" evidence="2">
    <location>
        <begin position="200"/>
        <end position="220"/>
    </location>
</feature>
<feature type="transmembrane region" description="Helical" evidence="2">
    <location>
        <begin position="252"/>
        <end position="272"/>
    </location>
</feature>
<feature type="transmembrane region" description="Helical" evidence="2">
    <location>
        <begin position="284"/>
        <end position="304"/>
    </location>
</feature>
<feature type="transmembrane region" description="Helical" evidence="2">
    <location>
        <begin position="318"/>
        <end position="338"/>
    </location>
</feature>
<feature type="transmembrane region" description="Helical" evidence="2">
    <location>
        <begin position="355"/>
        <end position="375"/>
    </location>
</feature>
<feature type="transmembrane region" description="Helical" evidence="2">
    <location>
        <begin position="394"/>
        <end position="414"/>
    </location>
</feature>
<feature type="transmembrane region" description="Helical" evidence="2">
    <location>
        <begin position="431"/>
        <end position="451"/>
    </location>
</feature>
<feature type="transmembrane region" description="Helical" evidence="2">
    <location>
        <begin position="473"/>
        <end position="493"/>
    </location>
</feature>
<feature type="binding site" description="axial binding residue" evidence="1">
    <location>
        <position position="79"/>
    </location>
    <ligand>
        <name>Fe(II)-heme a</name>
        <dbReference type="ChEBI" id="CHEBI:61715"/>
    </ligand>
    <ligandPart>
        <name>Fe</name>
        <dbReference type="ChEBI" id="CHEBI:18248"/>
    </ligandPart>
</feature>
<feature type="binding site" evidence="1">
    <location>
        <position position="258"/>
    </location>
    <ligand>
        <name>Cu cation</name>
        <dbReference type="ChEBI" id="CHEBI:23378"/>
        <label>B</label>
    </ligand>
</feature>
<feature type="binding site" evidence="1">
    <location>
        <position position="262"/>
    </location>
    <ligand>
        <name>Cu cation</name>
        <dbReference type="ChEBI" id="CHEBI:23378"/>
        <label>B</label>
    </ligand>
</feature>
<feature type="binding site" evidence="1">
    <location>
        <position position="307"/>
    </location>
    <ligand>
        <name>Cu cation</name>
        <dbReference type="ChEBI" id="CHEBI:23378"/>
        <label>B</label>
    </ligand>
</feature>
<feature type="binding site" evidence="1">
    <location>
        <position position="308"/>
    </location>
    <ligand>
        <name>Cu cation</name>
        <dbReference type="ChEBI" id="CHEBI:23378"/>
        <label>B</label>
    </ligand>
</feature>
<feature type="binding site" description="axial binding residue" evidence="1">
    <location>
        <position position="393"/>
    </location>
    <ligand>
        <name>heme a3</name>
        <dbReference type="ChEBI" id="CHEBI:83282"/>
    </ligand>
    <ligandPart>
        <name>Fe</name>
        <dbReference type="ChEBI" id="CHEBI:18248"/>
    </ligandPart>
</feature>
<feature type="binding site" description="axial binding residue" evidence="1">
    <location>
        <position position="395"/>
    </location>
    <ligand>
        <name>Fe(II)-heme a</name>
        <dbReference type="ChEBI" id="CHEBI:61715"/>
    </ligand>
    <ligandPart>
        <name>Fe</name>
        <dbReference type="ChEBI" id="CHEBI:18248"/>
    </ligandPart>
</feature>
<dbReference type="EC" id="7.1.1.9"/>
<dbReference type="EMBL" id="CP000053">
    <property type="protein sequence ID" value="AAY61478.1"/>
    <property type="molecule type" value="Genomic_DNA"/>
</dbReference>
<dbReference type="SMR" id="Q4ULU5"/>
<dbReference type="STRING" id="315456.RF_0627"/>
<dbReference type="KEGG" id="rfe:RF_0627"/>
<dbReference type="eggNOG" id="COG0843">
    <property type="taxonomic scope" value="Bacteria"/>
</dbReference>
<dbReference type="HOGENOM" id="CLU_011899_7_3_5"/>
<dbReference type="OrthoDB" id="9803294at2"/>
<dbReference type="UniPathway" id="UPA00705"/>
<dbReference type="Proteomes" id="UP000008548">
    <property type="component" value="Chromosome"/>
</dbReference>
<dbReference type="GO" id="GO:0005886">
    <property type="term" value="C:plasma membrane"/>
    <property type="evidence" value="ECO:0007669"/>
    <property type="project" value="UniProtKB-SubCell"/>
</dbReference>
<dbReference type="GO" id="GO:0045277">
    <property type="term" value="C:respiratory chain complex IV"/>
    <property type="evidence" value="ECO:0007669"/>
    <property type="project" value="InterPro"/>
</dbReference>
<dbReference type="GO" id="GO:0004129">
    <property type="term" value="F:cytochrome-c oxidase activity"/>
    <property type="evidence" value="ECO:0007669"/>
    <property type="project" value="UniProtKB-EC"/>
</dbReference>
<dbReference type="GO" id="GO:0020037">
    <property type="term" value="F:heme binding"/>
    <property type="evidence" value="ECO:0007669"/>
    <property type="project" value="InterPro"/>
</dbReference>
<dbReference type="GO" id="GO:0046872">
    <property type="term" value="F:metal ion binding"/>
    <property type="evidence" value="ECO:0007669"/>
    <property type="project" value="UniProtKB-KW"/>
</dbReference>
<dbReference type="GO" id="GO:0015990">
    <property type="term" value="P:electron transport coupled proton transport"/>
    <property type="evidence" value="ECO:0007669"/>
    <property type="project" value="InterPro"/>
</dbReference>
<dbReference type="GO" id="GO:0006119">
    <property type="term" value="P:oxidative phosphorylation"/>
    <property type="evidence" value="ECO:0007669"/>
    <property type="project" value="UniProtKB-UniPathway"/>
</dbReference>
<dbReference type="GO" id="GO:0022904">
    <property type="term" value="P:respiratory electron transport chain"/>
    <property type="evidence" value="ECO:0007669"/>
    <property type="project" value="TreeGrafter"/>
</dbReference>
<dbReference type="CDD" id="cd01663">
    <property type="entry name" value="Cyt_c_Oxidase_I"/>
    <property type="match status" value="1"/>
</dbReference>
<dbReference type="FunFam" id="1.20.210.10:FF:000004">
    <property type="entry name" value="Cytochrome c oxidase subunit 1"/>
    <property type="match status" value="1"/>
</dbReference>
<dbReference type="Gene3D" id="1.20.210.10">
    <property type="entry name" value="Cytochrome c oxidase-like, subunit I domain"/>
    <property type="match status" value="1"/>
</dbReference>
<dbReference type="InterPro" id="IPR023616">
    <property type="entry name" value="Cyt_c_oxase-like_su1_dom"/>
</dbReference>
<dbReference type="InterPro" id="IPR036927">
    <property type="entry name" value="Cyt_c_oxase-like_su1_sf"/>
</dbReference>
<dbReference type="InterPro" id="IPR000883">
    <property type="entry name" value="Cyt_C_Oxase_1"/>
</dbReference>
<dbReference type="InterPro" id="IPR023615">
    <property type="entry name" value="Cyt_c_Oxase_su1_BS"/>
</dbReference>
<dbReference type="InterPro" id="IPR033944">
    <property type="entry name" value="Cyt_c_oxase_su1_dom"/>
</dbReference>
<dbReference type="InterPro" id="IPR014241">
    <property type="entry name" value="Cyt_c_oxidase_su1_bac"/>
</dbReference>
<dbReference type="NCBIfam" id="TIGR02891">
    <property type="entry name" value="CtaD_CoxA"/>
    <property type="match status" value="1"/>
</dbReference>
<dbReference type="PANTHER" id="PTHR10422">
    <property type="entry name" value="CYTOCHROME C OXIDASE SUBUNIT 1"/>
    <property type="match status" value="1"/>
</dbReference>
<dbReference type="PANTHER" id="PTHR10422:SF18">
    <property type="entry name" value="CYTOCHROME C OXIDASE SUBUNIT 1"/>
    <property type="match status" value="1"/>
</dbReference>
<dbReference type="Pfam" id="PF00115">
    <property type="entry name" value="COX1"/>
    <property type="match status" value="1"/>
</dbReference>
<dbReference type="PRINTS" id="PR01165">
    <property type="entry name" value="CYCOXIDASEI"/>
</dbReference>
<dbReference type="SUPFAM" id="SSF81442">
    <property type="entry name" value="Cytochrome c oxidase subunit I-like"/>
    <property type="match status" value="1"/>
</dbReference>
<dbReference type="PROSITE" id="PS50855">
    <property type="entry name" value="COX1"/>
    <property type="match status" value="1"/>
</dbReference>
<dbReference type="PROSITE" id="PS00077">
    <property type="entry name" value="COX1_CUB"/>
    <property type="match status" value="1"/>
</dbReference>
<reference key="1">
    <citation type="journal article" date="2005" name="PLoS Biol.">
        <title>The genome sequence of Rickettsia felis identifies the first putative conjugative plasmid in an obligate intracellular parasite.</title>
        <authorList>
            <person name="Ogata H."/>
            <person name="Renesto P."/>
            <person name="Audic S."/>
            <person name="Robert C."/>
            <person name="Blanc G."/>
            <person name="Fournier P.-E."/>
            <person name="Parinello H."/>
            <person name="Claverie J.-M."/>
            <person name="Raoult D."/>
        </authorList>
    </citation>
    <scope>NUCLEOTIDE SEQUENCE [LARGE SCALE GENOMIC DNA]</scope>
    <source>
        <strain>ATCC VR-1525 / URRWXCal2</strain>
    </source>
</reference>
<gene>
    <name type="primary">ctaD</name>
    <name type="synonym">coxA</name>
    <name type="ordered locus">RF_0627</name>
</gene>
<name>COX1_RICFE</name>
<comment type="function">
    <text evidence="1">Cytochrome c oxidase is the component of the respiratory chain that catalyzes the reduction of oxygen to water. Subunits 1-3 form the functional core of the enzyme complex. CO I is the catalytic subunit of the enzyme. Electrons originating in cytochrome c are transferred via the copper A center of subunit 2 and heme A of subunit 1 to the bimetallic center formed by heme A3 and copper B (By similarity).</text>
</comment>
<comment type="catalytic activity">
    <reaction>
        <text>4 Fe(II)-[cytochrome c] + O2 + 8 H(+)(in) = 4 Fe(III)-[cytochrome c] + 2 H2O + 4 H(+)(out)</text>
        <dbReference type="Rhea" id="RHEA:11436"/>
        <dbReference type="Rhea" id="RHEA-COMP:10350"/>
        <dbReference type="Rhea" id="RHEA-COMP:14399"/>
        <dbReference type="ChEBI" id="CHEBI:15377"/>
        <dbReference type="ChEBI" id="CHEBI:15378"/>
        <dbReference type="ChEBI" id="CHEBI:15379"/>
        <dbReference type="ChEBI" id="CHEBI:29033"/>
        <dbReference type="ChEBI" id="CHEBI:29034"/>
        <dbReference type="EC" id="7.1.1.9"/>
    </reaction>
</comment>
<comment type="pathway">
    <text>Energy metabolism; oxidative phosphorylation.</text>
</comment>
<comment type="subcellular location">
    <subcellularLocation>
        <location>Cell membrane</location>
        <topology>Multi-pass membrane protein</topology>
    </subcellularLocation>
</comment>
<comment type="similarity">
    <text evidence="3">Belongs to the heme-copper respiratory oxidase family.</text>
</comment>